<name>KYNU2_CHAGB</name>
<proteinExistence type="inferred from homology"/>
<keyword id="KW-0963">Cytoplasm</keyword>
<keyword id="KW-0378">Hydrolase</keyword>
<keyword id="KW-0662">Pyridine nucleotide biosynthesis</keyword>
<keyword id="KW-0663">Pyridoxal phosphate</keyword>
<keyword id="KW-1185">Reference proteome</keyword>
<gene>
    <name evidence="1" type="primary">BNA5-2</name>
    <name type="ORF">CHGG_05403</name>
</gene>
<sequence length="539" mass="57881">MDTEYQSFVETLRAGQKPEFPAHAKTIEYARELDAHDKLSQLRSDFNIPTKGSLRKKALDGGVAGETKEPRVPNGVSSATKPNGTVNSDLKDDEASIYFVGNSLGAQPKCIRQYIDAHLETWASIGVNGHFTSFDNSPLASWQDMAAACAAQSVDLVGAKSANEIIYMNTLTVNLHLMMASFYRPTAKRHKIIAEWKPFPSDSYALASQLHWHGLAPATSLIEIHPPNPTGSSPPTLTLTTSHILATIDAHADSTALLLLPGIQYYTGQLFDMARITRHARARGIVVGWDLAHAVGNVELELHAWGVDFAVWCTYKYLNAGPGALGGVFVHGRHHSFHRGGGGSGGVGGGRGEGGDGDGGDGGDGDGMALGYRHRLAGWYGADKAVRFEMEKVFWPAEGAAGWQVSNPSVVDLACVRATLGMFERVGMRALRDKAVLLTGYLEWLLLGLLADGVGKGGDGEAAFRIITPGHPADRGSQLSLLLRGGLLEGVSKELADGGVVVDVRKPDVIRVAPVPMYCRFEDVWGFITVFNRALDRCA</sequence>
<evidence type="ECO:0000255" key="1">
    <source>
        <dbReference type="HAMAP-Rule" id="MF_03017"/>
    </source>
</evidence>
<evidence type="ECO:0000256" key="2">
    <source>
        <dbReference type="SAM" id="MobiDB-lite"/>
    </source>
</evidence>
<reference key="1">
    <citation type="journal article" date="2015" name="Genome Announc.">
        <title>Draft genome sequence of the cellulolytic fungus Chaetomium globosum.</title>
        <authorList>
            <person name="Cuomo C.A."/>
            <person name="Untereiner W.A."/>
            <person name="Ma L.-J."/>
            <person name="Grabherr M."/>
            <person name="Birren B.W."/>
        </authorList>
    </citation>
    <scope>NUCLEOTIDE SEQUENCE [LARGE SCALE GENOMIC DNA]</scope>
    <source>
        <strain>ATCC 6205 / CBS 148.51 / DSM 1962 / NBRC 6347 / NRRL 1970</strain>
    </source>
</reference>
<protein>
    <recommendedName>
        <fullName evidence="1">Kynureninase 2</fullName>
        <ecNumber evidence="1">3.7.1.3</ecNumber>
    </recommendedName>
    <alternativeName>
        <fullName evidence="1">Biosynthesis of nicotinic acid protein 5-2</fullName>
    </alternativeName>
    <alternativeName>
        <fullName evidence="1">L-kynurenine hydrolase 2</fullName>
    </alternativeName>
</protein>
<dbReference type="EC" id="3.7.1.3" evidence="1"/>
<dbReference type="EMBL" id="CH408031">
    <property type="protein sequence ID" value="EAQ88784.1"/>
    <property type="molecule type" value="Genomic_DNA"/>
</dbReference>
<dbReference type="RefSeq" id="XP_001221498.1">
    <property type="nucleotide sequence ID" value="XM_001221497.1"/>
</dbReference>
<dbReference type="SMR" id="Q2H7G2"/>
<dbReference type="FunCoup" id="Q2H7G2">
    <property type="interactions" value="178"/>
</dbReference>
<dbReference type="STRING" id="306901.Q2H7G2"/>
<dbReference type="GeneID" id="4391213"/>
<dbReference type="VEuPathDB" id="FungiDB:CHGG_05403"/>
<dbReference type="eggNOG" id="KOG3846">
    <property type="taxonomic scope" value="Eukaryota"/>
</dbReference>
<dbReference type="HOGENOM" id="CLU_003433_4_0_1"/>
<dbReference type="InParanoid" id="Q2H7G2"/>
<dbReference type="OMA" id="SHVAYRS"/>
<dbReference type="OrthoDB" id="5978656at2759"/>
<dbReference type="UniPathway" id="UPA00253">
    <property type="reaction ID" value="UER00329"/>
</dbReference>
<dbReference type="UniPathway" id="UPA00334">
    <property type="reaction ID" value="UER00455"/>
</dbReference>
<dbReference type="Proteomes" id="UP000001056">
    <property type="component" value="Unassembled WGS sequence"/>
</dbReference>
<dbReference type="GO" id="GO:0005737">
    <property type="term" value="C:cytoplasm"/>
    <property type="evidence" value="ECO:0007669"/>
    <property type="project" value="UniProtKB-SubCell"/>
</dbReference>
<dbReference type="GO" id="GO:0030429">
    <property type="term" value="F:kynureninase activity"/>
    <property type="evidence" value="ECO:0007669"/>
    <property type="project" value="UniProtKB-UniRule"/>
</dbReference>
<dbReference type="GO" id="GO:0030170">
    <property type="term" value="F:pyridoxal phosphate binding"/>
    <property type="evidence" value="ECO:0007669"/>
    <property type="project" value="UniProtKB-UniRule"/>
</dbReference>
<dbReference type="GO" id="GO:0034354">
    <property type="term" value="P:'de novo' NAD biosynthetic process from L-tryptophan"/>
    <property type="evidence" value="ECO:0007669"/>
    <property type="project" value="UniProtKB-UniRule"/>
</dbReference>
<dbReference type="GO" id="GO:0043420">
    <property type="term" value="P:anthranilate metabolic process"/>
    <property type="evidence" value="ECO:0007669"/>
    <property type="project" value="UniProtKB-UniRule"/>
</dbReference>
<dbReference type="GO" id="GO:0097053">
    <property type="term" value="P:L-kynurenine catabolic process"/>
    <property type="evidence" value="ECO:0007669"/>
    <property type="project" value="UniProtKB-UniRule"/>
</dbReference>
<dbReference type="GO" id="GO:0019441">
    <property type="term" value="P:L-tryptophan catabolic process to kynurenine"/>
    <property type="evidence" value="ECO:0007669"/>
    <property type="project" value="TreeGrafter"/>
</dbReference>
<dbReference type="GO" id="GO:0019805">
    <property type="term" value="P:quinolinate biosynthetic process"/>
    <property type="evidence" value="ECO:0007669"/>
    <property type="project" value="UniProtKB-UniRule"/>
</dbReference>
<dbReference type="Gene3D" id="3.90.1150.10">
    <property type="entry name" value="Aspartate Aminotransferase, domain 1"/>
    <property type="match status" value="1"/>
</dbReference>
<dbReference type="Gene3D" id="3.40.640.10">
    <property type="entry name" value="Type I PLP-dependent aspartate aminotransferase-like (Major domain)"/>
    <property type="match status" value="1"/>
</dbReference>
<dbReference type="HAMAP" id="MF_01970">
    <property type="entry name" value="Kynureninase"/>
    <property type="match status" value="1"/>
</dbReference>
<dbReference type="InterPro" id="IPR000192">
    <property type="entry name" value="Aminotrans_V_dom"/>
</dbReference>
<dbReference type="InterPro" id="IPR010111">
    <property type="entry name" value="Kynureninase"/>
</dbReference>
<dbReference type="InterPro" id="IPR015424">
    <property type="entry name" value="PyrdxlP-dep_Trfase"/>
</dbReference>
<dbReference type="InterPro" id="IPR015421">
    <property type="entry name" value="PyrdxlP-dep_Trfase_major"/>
</dbReference>
<dbReference type="InterPro" id="IPR015422">
    <property type="entry name" value="PyrdxlP-dep_Trfase_small"/>
</dbReference>
<dbReference type="NCBIfam" id="TIGR01814">
    <property type="entry name" value="kynureninase"/>
    <property type="match status" value="1"/>
</dbReference>
<dbReference type="PANTHER" id="PTHR14084">
    <property type="entry name" value="KYNURENINASE"/>
    <property type="match status" value="1"/>
</dbReference>
<dbReference type="PANTHER" id="PTHR14084:SF2">
    <property type="entry name" value="KYNURENINASE 2"/>
    <property type="match status" value="1"/>
</dbReference>
<dbReference type="Pfam" id="PF00266">
    <property type="entry name" value="Aminotran_5"/>
    <property type="match status" value="1"/>
</dbReference>
<dbReference type="Pfam" id="PF22580">
    <property type="entry name" value="KYNU_C"/>
    <property type="match status" value="1"/>
</dbReference>
<dbReference type="PIRSF" id="PIRSF038800">
    <property type="entry name" value="KYNU"/>
    <property type="match status" value="1"/>
</dbReference>
<dbReference type="SUPFAM" id="SSF53383">
    <property type="entry name" value="PLP-dependent transferases"/>
    <property type="match status" value="1"/>
</dbReference>
<feature type="chain" id="PRO_0000356975" description="Kynureninase 2">
    <location>
        <begin position="1"/>
        <end position="539"/>
    </location>
</feature>
<feature type="region of interest" description="Disordered" evidence="2">
    <location>
        <begin position="60"/>
        <end position="87"/>
    </location>
</feature>
<feature type="region of interest" description="Disordered" evidence="2">
    <location>
        <begin position="340"/>
        <end position="363"/>
    </location>
</feature>
<feature type="compositionally biased region" description="Polar residues" evidence="2">
    <location>
        <begin position="75"/>
        <end position="87"/>
    </location>
</feature>
<feature type="compositionally biased region" description="Gly residues" evidence="2">
    <location>
        <begin position="340"/>
        <end position="352"/>
    </location>
</feature>
<feature type="binding site" evidence="1">
    <location>
        <position position="171"/>
    </location>
    <ligand>
        <name>pyridoxal 5'-phosphate</name>
        <dbReference type="ChEBI" id="CHEBI:597326"/>
    </ligand>
</feature>
<feature type="binding site" evidence="1">
    <location>
        <position position="172"/>
    </location>
    <ligand>
        <name>pyridoxal 5'-phosphate</name>
        <dbReference type="ChEBI" id="CHEBI:597326"/>
    </ligand>
</feature>
<feature type="binding site" evidence="1">
    <location>
        <begin position="199"/>
        <end position="202"/>
    </location>
    <ligand>
        <name>pyridoxal 5'-phosphate</name>
        <dbReference type="ChEBI" id="CHEBI:597326"/>
    </ligand>
</feature>
<feature type="binding site" evidence="1">
    <location>
        <position position="290"/>
    </location>
    <ligand>
        <name>pyridoxal 5'-phosphate</name>
        <dbReference type="ChEBI" id="CHEBI:597326"/>
    </ligand>
</feature>
<feature type="binding site" evidence="1">
    <location>
        <position position="293"/>
    </location>
    <ligand>
        <name>pyridoxal 5'-phosphate</name>
        <dbReference type="ChEBI" id="CHEBI:597326"/>
    </ligand>
</feature>
<feature type="binding site" evidence="1">
    <location>
        <position position="315"/>
    </location>
    <ligand>
        <name>pyridoxal 5'-phosphate</name>
        <dbReference type="ChEBI" id="CHEBI:597326"/>
    </ligand>
</feature>
<feature type="binding site" evidence="1">
    <location>
        <position position="379"/>
    </location>
    <ligand>
        <name>pyridoxal 5'-phosphate</name>
        <dbReference type="ChEBI" id="CHEBI:597326"/>
    </ligand>
</feature>
<feature type="binding site" evidence="1">
    <location>
        <position position="407"/>
    </location>
    <ligand>
        <name>pyridoxal 5'-phosphate</name>
        <dbReference type="ChEBI" id="CHEBI:597326"/>
    </ligand>
</feature>
<feature type="modified residue" description="N6-(pyridoxal phosphate)lysine" evidence="1">
    <location>
        <position position="316"/>
    </location>
</feature>
<comment type="function">
    <text evidence="1">Catalyzes the cleavage of L-kynurenine (L-Kyn) and L-3-hydroxykynurenine (L-3OHKyn) into anthranilic acid (AA) and 3-hydroxyanthranilic acid (3-OHAA), respectively.</text>
</comment>
<comment type="catalytic activity">
    <reaction evidence="1">
        <text>L-kynurenine + H2O = anthranilate + L-alanine + H(+)</text>
        <dbReference type="Rhea" id="RHEA:16813"/>
        <dbReference type="ChEBI" id="CHEBI:15377"/>
        <dbReference type="ChEBI" id="CHEBI:15378"/>
        <dbReference type="ChEBI" id="CHEBI:16567"/>
        <dbReference type="ChEBI" id="CHEBI:57959"/>
        <dbReference type="ChEBI" id="CHEBI:57972"/>
        <dbReference type="EC" id="3.7.1.3"/>
    </reaction>
</comment>
<comment type="catalytic activity">
    <reaction evidence="1">
        <text>3-hydroxy-L-kynurenine + H2O = 3-hydroxyanthranilate + L-alanine + H(+)</text>
        <dbReference type="Rhea" id="RHEA:25143"/>
        <dbReference type="ChEBI" id="CHEBI:15377"/>
        <dbReference type="ChEBI" id="CHEBI:15378"/>
        <dbReference type="ChEBI" id="CHEBI:36559"/>
        <dbReference type="ChEBI" id="CHEBI:57972"/>
        <dbReference type="ChEBI" id="CHEBI:58125"/>
        <dbReference type="EC" id="3.7.1.3"/>
    </reaction>
</comment>
<comment type="cofactor">
    <cofactor evidence="1">
        <name>pyridoxal 5'-phosphate</name>
        <dbReference type="ChEBI" id="CHEBI:597326"/>
    </cofactor>
</comment>
<comment type="pathway">
    <text evidence="1">Amino-acid degradation; L-kynurenine degradation; L-alanine and anthranilate from L-kynurenine: step 1/1.</text>
</comment>
<comment type="pathway">
    <text evidence="1">Cofactor biosynthesis; NAD(+) biosynthesis; quinolinate from L-kynurenine: step 2/3.</text>
</comment>
<comment type="subunit">
    <text evidence="1">Homodimer.</text>
</comment>
<comment type="subcellular location">
    <subcellularLocation>
        <location evidence="1">Cytoplasm</location>
    </subcellularLocation>
</comment>
<comment type="similarity">
    <text evidence="1">Belongs to the kynureninase family.</text>
</comment>
<organism>
    <name type="scientific">Chaetomium globosum (strain ATCC 6205 / CBS 148.51 / DSM 1962 / NBRC 6347 / NRRL 1970)</name>
    <name type="common">Soil fungus</name>
    <dbReference type="NCBI Taxonomy" id="306901"/>
    <lineage>
        <taxon>Eukaryota</taxon>
        <taxon>Fungi</taxon>
        <taxon>Dikarya</taxon>
        <taxon>Ascomycota</taxon>
        <taxon>Pezizomycotina</taxon>
        <taxon>Sordariomycetes</taxon>
        <taxon>Sordariomycetidae</taxon>
        <taxon>Sordariales</taxon>
        <taxon>Chaetomiaceae</taxon>
        <taxon>Chaetomium</taxon>
    </lineage>
</organism>
<accession>Q2H7G2</accession>